<reference key="1">
    <citation type="journal article" date="1996" name="Biochem. J.">
        <title>Towards a classification of glycosyltransferases based on amino acid sequence similarities: prokaryotic alpha-mannosyltransferases.</title>
        <authorList>
            <person name="Geremia R.A."/>
            <person name="Petroni E.A."/>
            <person name="Ielpi L."/>
            <person name="Henrissat B."/>
        </authorList>
    </citation>
    <scope>NUCLEOTIDE SEQUENCE [GENOMIC DNA]</scope>
    <source>
        <strain>NRRL B42</strain>
    </source>
</reference>
<reference key="2">
    <citation type="journal article" date="1996" name="J. Bacteriol.">
        <title>Isolation and nucleotide sequence of the GDP-mannose:cellobiosyl-diphosphopolyprenol alpha-mannosyltransferase gene from Acetobacter xylinum.</title>
        <authorList>
            <person name="Petroni E.A."/>
            <person name="Ielpi L."/>
        </authorList>
    </citation>
    <scope>NUCLEOTIDE SEQUENCE [GENOMIC DNA]</scope>
    <source>
        <strain>NRRL B42</strain>
    </source>
</reference>
<reference key="3">
    <citation type="journal article" date="1999" name="Mol. Gen. Genet.">
        <title>Expression and biochemical characterisation of recombinant AceA, a bacterial alpha-mannosyltransferase.</title>
        <authorList>
            <person name="Geremia R.A."/>
            <person name="Roux M."/>
            <person name="Ferreiro D.U."/>
            <person name="Dauphin-Dubois R."/>
            <person name="Lellouch A.C."/>
            <person name="Ielpi L."/>
        </authorList>
    </citation>
    <scope>FUNCTION</scope>
    <scope>CATALYTIC ACTIVITY</scope>
</reference>
<reference key="4">
    <citation type="journal article" date="2000" name="J. Biol. Chem.">
        <title>Identification of essential amino acids in the bacterial alpha -mannosyltransferase aceA.</title>
        <authorList>
            <person name="Abdian P.L."/>
            <person name="Lellouch A.C."/>
            <person name="Gautier C."/>
            <person name="Ielpi L."/>
            <person name="Geremia R.A."/>
        </authorList>
    </citation>
    <scope>FUNCTION</scope>
    <scope>CATALYTIC ACTIVITY</scope>
    <scope>MUTAGENESIS OF ASP-109; HIS-127; SER-162; LYS-211; LEU-270; GLU-287 AND GLU-295</scope>
</reference>
<name>GUMH_KOMXY</name>
<proteinExistence type="evidence at protein level"/>
<organism>
    <name type="scientific">Komagataeibacter xylinus</name>
    <name type="common">Gluconacetobacter xylinus</name>
    <dbReference type="NCBI Taxonomy" id="28448"/>
    <lineage>
        <taxon>Bacteria</taxon>
        <taxon>Pseudomonadati</taxon>
        <taxon>Pseudomonadota</taxon>
        <taxon>Alphaproteobacteria</taxon>
        <taxon>Acetobacterales</taxon>
        <taxon>Acetobacteraceae</taxon>
        <taxon>Komagataeibacter</taxon>
    </lineage>
</organism>
<accession>Q44571</accession>
<dbReference type="EC" id="2.4.1.252"/>
<dbReference type="EMBL" id="U37258">
    <property type="protein sequence ID" value="AAC44373.1"/>
    <property type="molecule type" value="Genomic_DNA"/>
</dbReference>
<dbReference type="SMR" id="Q44571"/>
<dbReference type="STRING" id="1220579.GCA_001571345_00669"/>
<dbReference type="CAZy" id="GT4">
    <property type="family name" value="Glycosyltransferase Family 4"/>
</dbReference>
<dbReference type="BioCyc" id="MetaCyc:MONOMER-15989"/>
<dbReference type="BRENDA" id="2.4.1.252">
    <property type="organism ID" value="50"/>
</dbReference>
<dbReference type="GO" id="GO:0016757">
    <property type="term" value="F:glycosyltransferase activity"/>
    <property type="evidence" value="ECO:0007669"/>
    <property type="project" value="UniProtKB-KW"/>
</dbReference>
<dbReference type="GO" id="GO:0009103">
    <property type="term" value="P:lipopolysaccharide biosynthetic process"/>
    <property type="evidence" value="ECO:0007669"/>
    <property type="project" value="TreeGrafter"/>
</dbReference>
<dbReference type="CDD" id="cd03801">
    <property type="entry name" value="GT4_PimA-like"/>
    <property type="match status" value="1"/>
</dbReference>
<dbReference type="Gene3D" id="3.40.50.2000">
    <property type="entry name" value="Glycogen Phosphorylase B"/>
    <property type="match status" value="2"/>
</dbReference>
<dbReference type="InterPro" id="IPR001296">
    <property type="entry name" value="Glyco_trans_1"/>
</dbReference>
<dbReference type="InterPro" id="IPR028098">
    <property type="entry name" value="Glyco_trans_4-like_N"/>
</dbReference>
<dbReference type="PANTHER" id="PTHR46401">
    <property type="entry name" value="GLYCOSYLTRANSFERASE WBBK-RELATED"/>
    <property type="match status" value="1"/>
</dbReference>
<dbReference type="PANTHER" id="PTHR46401:SF2">
    <property type="entry name" value="GLYCOSYLTRANSFERASE WBBK-RELATED"/>
    <property type="match status" value="1"/>
</dbReference>
<dbReference type="Pfam" id="PF13439">
    <property type="entry name" value="Glyco_transf_4"/>
    <property type="match status" value="1"/>
</dbReference>
<dbReference type="Pfam" id="PF00534">
    <property type="entry name" value="Glycos_transf_1"/>
    <property type="match status" value="1"/>
</dbReference>
<dbReference type="SUPFAM" id="SSF53756">
    <property type="entry name" value="UDP-Glycosyltransferase/glycogen phosphorylase"/>
    <property type="match status" value="1"/>
</dbReference>
<sequence>MNSKKRGDETLKVLHICRQFSPSVGGLEDSLLNLARSQRQRLGIDAEVLTLDTVFGRPGKLPHRDVVDGIPVTRLAWRGSTKYPLAPQVLRHIGGFDLLHVHAIDFFFDFLAWTWPLHRKTMIASTHGGFFHTGALRRIKEIWFRTITPISVRAYKKIVACSYSDADLFRHVAAGRLITIENGINQTRFRDAASRTPNRTILAFGRFAVHKRLKLLFQLVALLRAYNSGWNIIVAGQDSNLTADDLRAQARACGIEDSLRIVSGPSDAELRGLMGEASFFGCLSAHEGFGLAAVEAMSAGLVPILSNITPFARLMQQGAAGVMVNPDNLAPGAREAEDMAAALPETADALRARNMDVASRYDWHSVAHEYARLYQQVLGRALPEANMAAAGAE</sequence>
<protein>
    <recommendedName>
        <fullName>GDP-mannose:cellobiosyl-diphosphopolyprenol alpha-mannosyltransferase</fullName>
        <ecNumber>2.4.1.252</ecNumber>
    </recommendedName>
</protein>
<comment type="function">
    <text evidence="1 2">Involved in the biosynthesis of the exopolysaccharide acetan, a water-soluble polysaccharide involved in production of bacterial cellulose (BC).</text>
</comment>
<comment type="catalytic activity">
    <reaction evidence="1 2">
        <text>beta-D-Glc-(1-&gt;4)-alpha-D-Glc-di-trans,octa-cis-undecaprenyl diphosphate + GDP-alpha-D-mannose = alpha-D-Man-(1-&gt;3)-beta-D-Glc-(1-&gt;4)-alpha-D-Glc-1-di-trans,octa-cis-undecaprenyl diphosphate + GDP + H(+)</text>
        <dbReference type="Rhea" id="RHEA:28310"/>
        <dbReference type="ChEBI" id="CHEBI:15378"/>
        <dbReference type="ChEBI" id="CHEBI:57527"/>
        <dbReference type="ChEBI" id="CHEBI:58189"/>
        <dbReference type="ChEBI" id="CHEBI:61247"/>
        <dbReference type="ChEBI" id="CHEBI:61252"/>
        <dbReference type="EC" id="2.4.1.252"/>
    </reaction>
</comment>
<comment type="similarity">
    <text evidence="3">Belongs to the glycosyltransferase group 1 family. Glycosyltransferase 4 subfamily.</text>
</comment>
<comment type="caution">
    <text evidence="4">The gene has been independently discovered by another group, who referred to it as aceA, causing confusion with the aceA gene which encodes a undecaprenyl-phosphate glucose phosphotransferase.</text>
</comment>
<evidence type="ECO:0000269" key="1">
    <source>
    </source>
</evidence>
<evidence type="ECO:0000269" key="2">
    <source>
    </source>
</evidence>
<evidence type="ECO:0000305" key="3"/>
<evidence type="ECO:0000305" key="4">
    <source>
    </source>
</evidence>
<feature type="chain" id="PRO_0000424203" description="GDP-mannose:cellobiosyl-diphosphopolyprenol alpha-mannosyltransferase">
    <location>
        <begin position="1"/>
        <end position="393"/>
    </location>
</feature>
<feature type="mutagenesis site" description="Decreases strongly catalytic activity." evidence="2">
    <original>D</original>
    <variation>A</variation>
    <location>
        <position position="109"/>
    </location>
</feature>
<feature type="mutagenesis site" description="Decreases strongly catalytic activity." evidence="2">
    <original>H</original>
    <variation>A</variation>
    <location>
        <position position="127"/>
    </location>
</feature>
<feature type="mutagenesis site" description="Decreases strongly catalytic activity." evidence="2">
    <original>S</original>
    <variation>A</variation>
    <location>
        <position position="162"/>
    </location>
</feature>
<feature type="mutagenesis site" description="Abolishes catalytic activity." evidence="2">
    <original>K</original>
    <variation>A</variation>
    <location>
        <position position="211"/>
    </location>
</feature>
<feature type="mutagenesis site" description="Decreases catalytic activity." evidence="2">
    <original>L</original>
    <variation>A</variation>
    <location>
        <position position="270"/>
    </location>
</feature>
<feature type="mutagenesis site" description="Abolishes catalytic activity." evidence="2">
    <original>E</original>
    <variation>A</variation>
    <location>
        <position position="287"/>
    </location>
</feature>
<feature type="mutagenesis site" description="Decreases strongly catalytic activity." evidence="2">
    <original>E</original>
    <variation>A</variation>
    <location>
        <position position="295"/>
    </location>
</feature>
<keyword id="KW-0270">Exopolysaccharide synthesis</keyword>
<keyword id="KW-0328">Glycosyltransferase</keyword>
<keyword id="KW-0808">Transferase</keyword>
<gene>
    <name type="primary">aceC</name>
    <name type="synonym">aceA</name>
</gene>